<evidence type="ECO:0000255" key="1">
    <source>
        <dbReference type="HAMAP-Rule" id="MF_01337"/>
    </source>
</evidence>
<evidence type="ECO:0000256" key="2">
    <source>
        <dbReference type="SAM" id="MobiDB-lite"/>
    </source>
</evidence>
<evidence type="ECO:0000305" key="3"/>
<accession>Q47LK9</accession>
<organism>
    <name type="scientific">Thermobifida fusca (strain YX)</name>
    <dbReference type="NCBI Taxonomy" id="269800"/>
    <lineage>
        <taxon>Bacteria</taxon>
        <taxon>Bacillati</taxon>
        <taxon>Actinomycetota</taxon>
        <taxon>Actinomycetes</taxon>
        <taxon>Streptosporangiales</taxon>
        <taxon>Nocardiopsidaceae</taxon>
        <taxon>Thermobifida</taxon>
    </lineage>
</organism>
<sequence>MAKRSSLTRRGVSPRAAARARRHMRVRKKVRGTPERPRLVVTRSLKHIVAQIVDDTKGHTLVSASTLEASIRGEEGRKTEKSHLVGKVLAERAKAAGITAVVFDRAGYRYHGRVAALANGAREGGLEF</sequence>
<keyword id="KW-0687">Ribonucleoprotein</keyword>
<keyword id="KW-0689">Ribosomal protein</keyword>
<keyword id="KW-0694">RNA-binding</keyword>
<keyword id="KW-0699">rRNA-binding</keyword>
<gene>
    <name evidence="1" type="primary">rplR</name>
    <name type="ordered locus">Tfu_2630</name>
</gene>
<name>RL18_THEFY</name>
<protein>
    <recommendedName>
        <fullName evidence="1">Large ribosomal subunit protein uL18</fullName>
    </recommendedName>
    <alternativeName>
        <fullName evidence="3">50S ribosomal protein L18</fullName>
    </alternativeName>
</protein>
<comment type="function">
    <text evidence="1">This is one of the proteins that bind and probably mediate the attachment of the 5S RNA into the large ribosomal subunit, where it forms part of the central protuberance.</text>
</comment>
<comment type="subunit">
    <text evidence="1">Part of the 50S ribosomal subunit; part of the 5S rRNA/L5/L18/L25 subcomplex. Contacts the 5S and 23S rRNAs.</text>
</comment>
<comment type="similarity">
    <text evidence="1">Belongs to the universal ribosomal protein uL18 family.</text>
</comment>
<dbReference type="EMBL" id="CP000088">
    <property type="protein sequence ID" value="AAZ56663.1"/>
    <property type="molecule type" value="Genomic_DNA"/>
</dbReference>
<dbReference type="RefSeq" id="WP_011293053.1">
    <property type="nucleotide sequence ID" value="NC_007333.1"/>
</dbReference>
<dbReference type="SMR" id="Q47LK9"/>
<dbReference type="STRING" id="269800.Tfu_2630"/>
<dbReference type="KEGG" id="tfu:Tfu_2630"/>
<dbReference type="eggNOG" id="COG0256">
    <property type="taxonomic scope" value="Bacteria"/>
</dbReference>
<dbReference type="HOGENOM" id="CLU_098841_0_1_11"/>
<dbReference type="OrthoDB" id="9810939at2"/>
<dbReference type="GO" id="GO:0022625">
    <property type="term" value="C:cytosolic large ribosomal subunit"/>
    <property type="evidence" value="ECO:0007669"/>
    <property type="project" value="TreeGrafter"/>
</dbReference>
<dbReference type="GO" id="GO:0008097">
    <property type="term" value="F:5S rRNA binding"/>
    <property type="evidence" value="ECO:0007669"/>
    <property type="project" value="TreeGrafter"/>
</dbReference>
<dbReference type="GO" id="GO:0003735">
    <property type="term" value="F:structural constituent of ribosome"/>
    <property type="evidence" value="ECO:0007669"/>
    <property type="project" value="InterPro"/>
</dbReference>
<dbReference type="GO" id="GO:0006412">
    <property type="term" value="P:translation"/>
    <property type="evidence" value="ECO:0007669"/>
    <property type="project" value="UniProtKB-UniRule"/>
</dbReference>
<dbReference type="CDD" id="cd00432">
    <property type="entry name" value="Ribosomal_L18_L5e"/>
    <property type="match status" value="1"/>
</dbReference>
<dbReference type="FunFam" id="3.30.420.100:FF:000001">
    <property type="entry name" value="50S ribosomal protein L18"/>
    <property type="match status" value="1"/>
</dbReference>
<dbReference type="Gene3D" id="3.30.420.100">
    <property type="match status" value="1"/>
</dbReference>
<dbReference type="HAMAP" id="MF_01337_B">
    <property type="entry name" value="Ribosomal_uL18_B"/>
    <property type="match status" value="1"/>
</dbReference>
<dbReference type="InterPro" id="IPR004389">
    <property type="entry name" value="Ribosomal_uL18_bac-type"/>
</dbReference>
<dbReference type="InterPro" id="IPR005484">
    <property type="entry name" value="Ribosomal_uL18_bac/euk"/>
</dbReference>
<dbReference type="NCBIfam" id="TIGR00060">
    <property type="entry name" value="L18_bact"/>
    <property type="match status" value="1"/>
</dbReference>
<dbReference type="PANTHER" id="PTHR12899">
    <property type="entry name" value="39S RIBOSOMAL PROTEIN L18, MITOCHONDRIAL"/>
    <property type="match status" value="1"/>
</dbReference>
<dbReference type="PANTHER" id="PTHR12899:SF3">
    <property type="entry name" value="LARGE RIBOSOMAL SUBUNIT PROTEIN UL18M"/>
    <property type="match status" value="1"/>
</dbReference>
<dbReference type="Pfam" id="PF00861">
    <property type="entry name" value="Ribosomal_L18p"/>
    <property type="match status" value="1"/>
</dbReference>
<dbReference type="SUPFAM" id="SSF53137">
    <property type="entry name" value="Translational machinery components"/>
    <property type="match status" value="1"/>
</dbReference>
<proteinExistence type="inferred from homology"/>
<reference key="1">
    <citation type="journal article" date="2007" name="J. Bacteriol.">
        <title>Genome sequence and analysis of the soil cellulolytic actinomycete Thermobifida fusca YX.</title>
        <authorList>
            <person name="Lykidis A."/>
            <person name="Mavromatis K."/>
            <person name="Ivanova N."/>
            <person name="Anderson I."/>
            <person name="Land M."/>
            <person name="DiBartolo G."/>
            <person name="Martinez M."/>
            <person name="Lapidus A."/>
            <person name="Lucas S."/>
            <person name="Copeland A."/>
            <person name="Richardson P."/>
            <person name="Wilson D.B."/>
            <person name="Kyrpides N."/>
        </authorList>
    </citation>
    <scope>NUCLEOTIDE SEQUENCE [LARGE SCALE GENOMIC DNA]</scope>
    <source>
        <strain>YX</strain>
    </source>
</reference>
<feature type="chain" id="PRO_0000251388" description="Large ribosomal subunit protein uL18">
    <location>
        <begin position="1"/>
        <end position="128"/>
    </location>
</feature>
<feature type="region of interest" description="Disordered" evidence="2">
    <location>
        <begin position="1"/>
        <end position="36"/>
    </location>
</feature>
<feature type="compositionally biased region" description="Basic residues" evidence="2">
    <location>
        <begin position="18"/>
        <end position="31"/>
    </location>
</feature>